<organism>
    <name type="scientific">Phalaenopsis aphrodite subsp. formosana</name>
    <name type="common">Moth orchid</name>
    <dbReference type="NCBI Taxonomy" id="308872"/>
    <lineage>
        <taxon>Eukaryota</taxon>
        <taxon>Viridiplantae</taxon>
        <taxon>Streptophyta</taxon>
        <taxon>Embryophyta</taxon>
        <taxon>Tracheophyta</taxon>
        <taxon>Spermatophyta</taxon>
        <taxon>Magnoliopsida</taxon>
        <taxon>Liliopsida</taxon>
        <taxon>Asparagales</taxon>
        <taxon>Orchidaceae</taxon>
        <taxon>Epidendroideae</taxon>
        <taxon>Vandeae</taxon>
        <taxon>Aeridinae</taxon>
        <taxon>Phalaenopsis</taxon>
    </lineage>
</organism>
<geneLocation type="chloroplast"/>
<name>RK33_PHAAO</name>
<reference key="1">
    <citation type="journal article" date="2006" name="Mol. Biol. Evol.">
        <title>The chloroplast genome of Phalaenopsis aphrodite (Orchidaceae): comparative analysis of evolutionary rate with that of grasses and its phylogenetic implications.</title>
        <authorList>
            <person name="Chang C.-C."/>
            <person name="Lin H.-C."/>
            <person name="Lin I.-P."/>
            <person name="Chow T.-Y."/>
            <person name="Chen H.-H."/>
            <person name="Chen W.-H."/>
            <person name="Cheng C.-H."/>
            <person name="Lin C.-Y."/>
            <person name="Liu S.-M."/>
            <person name="Chang C.-C."/>
            <person name="Chaw S.-M."/>
        </authorList>
    </citation>
    <scope>NUCLEOTIDE SEQUENCE [LARGE SCALE GENOMIC DNA]</scope>
    <source>
        <strain>cv. Taisugar TS-97</strain>
    </source>
</reference>
<feature type="chain" id="PRO_0000276513" description="Large ribosomal subunit protein bL33c">
    <location>
        <begin position="1"/>
        <end position="66"/>
    </location>
</feature>
<keyword id="KW-0150">Chloroplast</keyword>
<keyword id="KW-0934">Plastid</keyword>
<keyword id="KW-0687">Ribonucleoprotein</keyword>
<keyword id="KW-0689">Ribosomal protein</keyword>
<gene>
    <name evidence="1" type="primary">rpl33</name>
</gene>
<dbReference type="EMBL" id="AY916449">
    <property type="protein sequence ID" value="AAW82521.1"/>
    <property type="molecule type" value="Genomic_DNA"/>
</dbReference>
<dbReference type="RefSeq" id="YP_358599.1">
    <property type="nucleotide sequence ID" value="NC_007499.1"/>
</dbReference>
<dbReference type="GO" id="GO:0009507">
    <property type="term" value="C:chloroplast"/>
    <property type="evidence" value="ECO:0007669"/>
    <property type="project" value="UniProtKB-SubCell"/>
</dbReference>
<dbReference type="GO" id="GO:1990904">
    <property type="term" value="C:ribonucleoprotein complex"/>
    <property type="evidence" value="ECO:0007669"/>
    <property type="project" value="UniProtKB-KW"/>
</dbReference>
<dbReference type="GO" id="GO:0005840">
    <property type="term" value="C:ribosome"/>
    <property type="evidence" value="ECO:0007669"/>
    <property type="project" value="UniProtKB-KW"/>
</dbReference>
<dbReference type="GO" id="GO:0003735">
    <property type="term" value="F:structural constituent of ribosome"/>
    <property type="evidence" value="ECO:0007669"/>
    <property type="project" value="InterPro"/>
</dbReference>
<dbReference type="GO" id="GO:0006412">
    <property type="term" value="P:translation"/>
    <property type="evidence" value="ECO:0007669"/>
    <property type="project" value="UniProtKB-UniRule"/>
</dbReference>
<dbReference type="Gene3D" id="2.20.28.120">
    <property type="entry name" value="Ribosomal protein L33"/>
    <property type="match status" value="1"/>
</dbReference>
<dbReference type="HAMAP" id="MF_00294">
    <property type="entry name" value="Ribosomal_bL33"/>
    <property type="match status" value="1"/>
</dbReference>
<dbReference type="InterPro" id="IPR001705">
    <property type="entry name" value="Ribosomal_bL33"/>
</dbReference>
<dbReference type="InterPro" id="IPR018264">
    <property type="entry name" value="Ribosomal_bL33_CS"/>
</dbReference>
<dbReference type="InterPro" id="IPR038584">
    <property type="entry name" value="Ribosomal_bL33_sf"/>
</dbReference>
<dbReference type="InterPro" id="IPR011332">
    <property type="entry name" value="Ribosomal_zn-bd"/>
</dbReference>
<dbReference type="NCBIfam" id="NF001764">
    <property type="entry name" value="PRK00504.1"/>
    <property type="match status" value="1"/>
</dbReference>
<dbReference type="NCBIfam" id="NF001860">
    <property type="entry name" value="PRK00595.1"/>
    <property type="match status" value="1"/>
</dbReference>
<dbReference type="NCBIfam" id="TIGR01023">
    <property type="entry name" value="rpmG_bact"/>
    <property type="match status" value="1"/>
</dbReference>
<dbReference type="PANTHER" id="PTHR43168">
    <property type="entry name" value="50S RIBOSOMAL PROTEIN L33, CHLOROPLASTIC"/>
    <property type="match status" value="1"/>
</dbReference>
<dbReference type="PANTHER" id="PTHR43168:SF2">
    <property type="entry name" value="LARGE RIBOSOMAL SUBUNIT PROTEIN BL33C"/>
    <property type="match status" value="1"/>
</dbReference>
<dbReference type="Pfam" id="PF00471">
    <property type="entry name" value="Ribosomal_L33"/>
    <property type="match status" value="1"/>
</dbReference>
<dbReference type="SUPFAM" id="SSF57829">
    <property type="entry name" value="Zn-binding ribosomal proteins"/>
    <property type="match status" value="1"/>
</dbReference>
<dbReference type="PROSITE" id="PS00582">
    <property type="entry name" value="RIBOSOMAL_L33"/>
    <property type="match status" value="1"/>
</dbReference>
<sequence length="66" mass="7857">MAKGKDIRIIVILECTCCVRKGVNKELLGISRYITQKNRHNTPNRLEFRKFCRYCQKYTIHGEIKK</sequence>
<accession>Q3BAL9</accession>
<evidence type="ECO:0000255" key="1">
    <source>
        <dbReference type="HAMAP-Rule" id="MF_00294"/>
    </source>
</evidence>
<evidence type="ECO:0000305" key="2"/>
<comment type="subcellular location">
    <subcellularLocation>
        <location>Plastid</location>
        <location>Chloroplast</location>
    </subcellularLocation>
</comment>
<comment type="similarity">
    <text evidence="1">Belongs to the bacterial ribosomal protein bL33 family.</text>
</comment>
<protein>
    <recommendedName>
        <fullName evidence="1">Large ribosomal subunit protein bL33c</fullName>
    </recommendedName>
    <alternativeName>
        <fullName evidence="2">50S ribosomal protein L33, chloroplastic</fullName>
    </alternativeName>
</protein>
<proteinExistence type="inferred from homology"/>